<name>MAGL2_HUMAN</name>
<keyword id="KW-1268">Autism spectrum disorder</keyword>
<keyword id="KW-0090">Biological rhythms</keyword>
<keyword id="KW-0963">Cytoplasm</keyword>
<keyword id="KW-0967">Endosome</keyword>
<keyword id="KW-0991">Intellectual disability</keyword>
<keyword id="KW-0539">Nucleus</keyword>
<keyword id="KW-0550">Obesity</keyword>
<keyword id="KW-1267">Proteomics identification</keyword>
<keyword id="KW-1185">Reference proteome</keyword>
<keyword id="KW-0678">Repressor</keyword>
<keyword id="KW-0804">Transcription</keyword>
<keyword id="KW-0805">Transcription regulation</keyword>
<keyword id="KW-0813">Transport</keyword>
<keyword id="KW-0833">Ubl conjugation pathway</keyword>
<organism>
    <name type="scientific">Homo sapiens</name>
    <name type="common">Human</name>
    <dbReference type="NCBI Taxonomy" id="9606"/>
    <lineage>
        <taxon>Eukaryota</taxon>
        <taxon>Metazoa</taxon>
        <taxon>Chordata</taxon>
        <taxon>Craniata</taxon>
        <taxon>Vertebrata</taxon>
        <taxon>Euteleostomi</taxon>
        <taxon>Mammalia</taxon>
        <taxon>Eutheria</taxon>
        <taxon>Euarchontoglires</taxon>
        <taxon>Primates</taxon>
        <taxon>Haplorrhini</taxon>
        <taxon>Catarrhini</taxon>
        <taxon>Hominidae</taxon>
        <taxon>Homo</taxon>
    </lineage>
</organism>
<sequence length="1249" mass="132822">MSQLSKNLGDSSPPAEAPKPPVYSRPTVLMRAPPASSRAPPVPWDPPPIDLQASLAAWQAPQPAWEAPQGQLPAPVVPMTQPPALGGPIVPAPPLGGPMGKPPTPGVLMVHPPPPGAPMAQPPTPGVLMVHPSAPGAPMAHPPPPGTPMSHPPPPGTPMAHPPPPGTPMAHPPPPGTPMVHPPPPGTPMAHPPPPGTPMAHPPPPGTPMAHPPPPGTPMAHPPPPGTPMAQPPAPGVLMAQPLTPGVLMVQPAAPGAPMVQPPPAAMMTQPQPSGAPMAKPPGPGVLMIHPPGARAPMTQPPASGAPMAQPAAPPAQPMAPPAQPMASWAPQAQPLILQIQSQVIRAPPQVPQGPQAPPAQLATPPGWQATSPGWQATQQGWQATPLTWQTTQVTWQAPAVTWQVPPPMRQGPPPIRPGPPPIRPGPPPVRQAPPLIRQAPPVIRQAPPVIRQAPPVIRQAPAVIRQAPPVIRQAPPVIRQAPPVIRQAPPLIRQAPPPIRPAPQVLATQPPLWQALPPPPPLRQAPQARLPAPQVQAAPQVPTAPPATQVPAAPPAGPQVPQPVLPAPLSAPLSAPQAVHCPSIIWQAPKGQPPVPHEIPTSMEFQEVQQTQALAWQAQKAPTHIWQPLPAQEAQRQAPPLVQLEQPFQGAPPSQKAVQIQLPPQQAQASGPQAEVPTLPLQPSWQAPPAVLQAQPGPPVAAANFPLGSAKSLMTPSGECRASSIDRRGSSKERRTSSKERRAPSKDRMIFAATFCAPKAVSAARAHLPAAWKNLPATPETFAPSSSVFPATSQFQPASLNAFKGPSAASETPKSLPYALQDPFACVEALPAVPWVPQPNMNASKASQAVPTFLMATAAAPQATATTQEASKTSVEPPRRSGKATRKKKHLEAQEDSRGHTLAFHDWQGPRPWENLNLSDWEVQSPIQVSGDWEHPNTPRGLSGWEGPSTSRILSGWEGPSASWALSAWEGPSTSRALGLSESPGSSLPVVVSEVASVSPGSSATQDNSKVEAQPLSPLDERANALVQFLLVKDQAKVPVQRSEMVKVILREYKDECLDIINRANNKLECAFGYQLKEIDTKNHAYIIINKLGYHTGNLVASYLDRPKFGLLMVVLSLIFMKGNCVREDLIFNFLFKLGLDVRETNGLFGNTKKLITEVFVRQKYLEYRRIPYTEPAEYEFLWGPRAFLETSKMLVLRFLAKLHKKDPQSWPFHYLEALAECEWEDTDEDEPDTGDSAHGPTSRPPPR</sequence>
<proteinExistence type="evidence at protein level"/>
<dbReference type="EMBL" id="AC124309">
    <property type="status" value="NOT_ANNOTATED_CDS"/>
    <property type="molecule type" value="Genomic_DNA"/>
</dbReference>
<dbReference type="EMBL" id="AF200625">
    <property type="protein sequence ID" value="AAG28577.1"/>
    <property type="status" value="ALT_FRAME"/>
    <property type="molecule type" value="Genomic_DNA"/>
</dbReference>
<dbReference type="EMBL" id="AJ243531">
    <property type="protein sequence ID" value="CAB62393.1"/>
    <property type="status" value="ALT_FRAME"/>
    <property type="molecule type" value="mRNA"/>
</dbReference>
<dbReference type="CCDS" id="CCDS73700.1"/>
<dbReference type="RefSeq" id="NP_061939.3">
    <property type="nucleotide sequence ID" value="NM_019066.5"/>
</dbReference>
<dbReference type="CORUM" id="Q9UJ55"/>
<dbReference type="FunCoup" id="Q9UJ55">
    <property type="interactions" value="91"/>
</dbReference>
<dbReference type="IntAct" id="Q9UJ55">
    <property type="interactions" value="5"/>
</dbReference>
<dbReference type="STRING" id="9606.ENSP00000497810"/>
<dbReference type="GlyGen" id="Q9UJ55">
    <property type="glycosylation" value="3 sites, 1 O-linked glycan (1 site)"/>
</dbReference>
<dbReference type="iPTMnet" id="Q9UJ55"/>
<dbReference type="PhosphoSitePlus" id="Q9UJ55"/>
<dbReference type="BioMuta" id="MAGEL2"/>
<dbReference type="DMDM" id="17380152"/>
<dbReference type="MassIVE" id="Q9UJ55"/>
<dbReference type="PaxDb" id="9606-ENSP00000433433"/>
<dbReference type="PeptideAtlas" id="Q9UJ55"/>
<dbReference type="ProteomicsDB" id="37358"/>
<dbReference type="ProteomicsDB" id="84587"/>
<dbReference type="Antibodypedia" id="58530">
    <property type="antibodies" value="99 antibodies from 14 providers"/>
</dbReference>
<dbReference type="DNASU" id="54551"/>
<dbReference type="Ensembl" id="ENST00000650528.1">
    <property type="protein sequence ID" value="ENSP00000497810.1"/>
    <property type="gene ID" value="ENSG00000254585.5"/>
</dbReference>
<dbReference type="Ensembl" id="ENST00000672700.1">
    <property type="protein sequence ID" value="ENSP00000499864.1"/>
    <property type="gene ID" value="ENSG00000288188.1"/>
</dbReference>
<dbReference type="Ensembl" id="ENST00000673192.1">
    <property type="protein sequence ID" value="ENSP00000500572.1"/>
    <property type="gene ID" value="ENSG00000288188.1"/>
</dbReference>
<dbReference type="GeneID" id="54551"/>
<dbReference type="KEGG" id="hsa:54551"/>
<dbReference type="MANE-Select" id="ENST00000650528.1">
    <property type="protein sequence ID" value="ENSP00000497810.1"/>
    <property type="RefSeq nucleotide sequence ID" value="NM_019066.5"/>
    <property type="RefSeq protein sequence ID" value="NP_061939.3"/>
</dbReference>
<dbReference type="UCSC" id="uc001ywj.5">
    <property type="organism name" value="human"/>
</dbReference>
<dbReference type="AGR" id="HGNC:6814"/>
<dbReference type="CTD" id="54551"/>
<dbReference type="DisGeNET" id="54551"/>
<dbReference type="GeneCards" id="MAGEL2"/>
<dbReference type="GeneReviews" id="MAGEL2"/>
<dbReference type="HGNC" id="HGNC:6814">
    <property type="gene designation" value="MAGEL2"/>
</dbReference>
<dbReference type="HPA" id="ENSG00000254585">
    <property type="expression patterns" value="Group enriched (brain, pituitary gland)"/>
</dbReference>
<dbReference type="MalaCards" id="MAGEL2"/>
<dbReference type="MIM" id="605283">
    <property type="type" value="gene"/>
</dbReference>
<dbReference type="MIM" id="615547">
    <property type="type" value="phenotype"/>
</dbReference>
<dbReference type="neXtProt" id="NX_Q9UJ55"/>
<dbReference type="OpenTargets" id="ENSG00000254585"/>
<dbReference type="Orphanet" id="994">
    <property type="disease" value="Fetal akinesia deformation sequence"/>
</dbReference>
<dbReference type="Orphanet" id="177910">
    <property type="disease" value="Prader-Willi syndrome due to imprinting mutation"/>
</dbReference>
<dbReference type="Orphanet" id="98754">
    <property type="disease" value="Prader-Willi syndrome due to maternal uniparental disomy of chromosome 15"/>
</dbReference>
<dbReference type="Orphanet" id="177901">
    <property type="disease" value="Prader-Willi syndrome due to paternal deletion of 15q11q13 type 1"/>
</dbReference>
<dbReference type="Orphanet" id="177904">
    <property type="disease" value="Prader-Willi syndrome due to paternal deletion of 15q11q13 type 2"/>
</dbReference>
<dbReference type="Orphanet" id="398069">
    <property type="disease" value="Schaaf-Yang syndrome"/>
</dbReference>
<dbReference type="VEuPathDB" id="HostDB:ENSG00000254585"/>
<dbReference type="eggNOG" id="KOG4562">
    <property type="taxonomic scope" value="Eukaryota"/>
</dbReference>
<dbReference type="GeneTree" id="ENSGT00940000163006"/>
<dbReference type="InParanoid" id="Q9UJ55"/>
<dbReference type="OMA" id="TQVTWQA"/>
<dbReference type="OrthoDB" id="205198at2759"/>
<dbReference type="PAN-GO" id="Q9UJ55">
    <property type="GO annotations" value="2 GO annotations based on evolutionary models"/>
</dbReference>
<dbReference type="TreeFam" id="TF328505"/>
<dbReference type="PathwayCommons" id="Q9UJ55"/>
<dbReference type="SignaLink" id="Q9UJ55"/>
<dbReference type="SIGNOR" id="Q9UJ55"/>
<dbReference type="BioGRID-ORCS" id="54551">
    <property type="hits" value="12 hits in 384 CRISPR screens"/>
</dbReference>
<dbReference type="GenomeRNAi" id="54551"/>
<dbReference type="Pharos" id="Q9UJ55">
    <property type="development level" value="Tbio"/>
</dbReference>
<dbReference type="PRO" id="PR:Q9UJ55"/>
<dbReference type="Proteomes" id="UP000005640">
    <property type="component" value="Chromosome 15"/>
</dbReference>
<dbReference type="RNAct" id="Q9UJ55">
    <property type="molecule type" value="protein"/>
</dbReference>
<dbReference type="Bgee" id="ENSG00000254585">
    <property type="expression patterns" value="Expressed in adrenal tissue and 97 other cell types or tissues"/>
</dbReference>
<dbReference type="GO" id="GO:0005829">
    <property type="term" value="C:cytosol"/>
    <property type="evidence" value="ECO:0007669"/>
    <property type="project" value="GOC"/>
</dbReference>
<dbReference type="GO" id="GO:0005769">
    <property type="term" value="C:early endosome"/>
    <property type="evidence" value="ECO:0007669"/>
    <property type="project" value="UniProtKB-SubCell"/>
</dbReference>
<dbReference type="GO" id="GO:0005768">
    <property type="term" value="C:endosome"/>
    <property type="evidence" value="ECO:0000314"/>
    <property type="project" value="UniProtKB"/>
</dbReference>
<dbReference type="GO" id="GO:0005634">
    <property type="term" value="C:nucleus"/>
    <property type="evidence" value="ECO:0000250"/>
    <property type="project" value="UniProtKB"/>
</dbReference>
<dbReference type="GO" id="GO:0004842">
    <property type="term" value="F:ubiquitin-protein transferase activity"/>
    <property type="evidence" value="ECO:0000315"/>
    <property type="project" value="UniProtKB"/>
</dbReference>
<dbReference type="GO" id="GO:0034314">
    <property type="term" value="P:Arp2/3 complex-mediated actin nucleation"/>
    <property type="evidence" value="ECO:0000314"/>
    <property type="project" value="UniProtKB"/>
</dbReference>
<dbReference type="GO" id="GO:0045892">
    <property type="term" value="P:negative regulation of DNA-templated transcription"/>
    <property type="evidence" value="ECO:0000250"/>
    <property type="project" value="UniProtKB"/>
</dbReference>
<dbReference type="GO" id="GO:0000122">
    <property type="term" value="P:negative regulation of transcription by RNA polymerase II"/>
    <property type="evidence" value="ECO:0000318"/>
    <property type="project" value="GO_Central"/>
</dbReference>
<dbReference type="GO" id="GO:0051127">
    <property type="term" value="P:positive regulation of actin nucleation"/>
    <property type="evidence" value="ECO:0007669"/>
    <property type="project" value="Ensembl"/>
</dbReference>
<dbReference type="GO" id="GO:0070534">
    <property type="term" value="P:protein K63-linked ubiquitination"/>
    <property type="evidence" value="ECO:0000315"/>
    <property type="project" value="UniProtKB"/>
</dbReference>
<dbReference type="GO" id="GO:0042752">
    <property type="term" value="P:regulation of circadian rhythm"/>
    <property type="evidence" value="ECO:0000250"/>
    <property type="project" value="UniProtKB"/>
</dbReference>
<dbReference type="GO" id="GO:0042147">
    <property type="term" value="P:retrograde transport, endosome to Golgi"/>
    <property type="evidence" value="ECO:0000314"/>
    <property type="project" value="UniProtKB"/>
</dbReference>
<dbReference type="GO" id="GO:0048511">
    <property type="term" value="P:rhythmic process"/>
    <property type="evidence" value="ECO:0007669"/>
    <property type="project" value="UniProtKB-KW"/>
</dbReference>
<dbReference type="FunFam" id="1.10.10.1200:FF:000001">
    <property type="entry name" value="Melanoma-associated antigen D1"/>
    <property type="match status" value="1"/>
</dbReference>
<dbReference type="FunFam" id="1.10.10.1210:FF:000001">
    <property type="entry name" value="melanoma-associated antigen D1"/>
    <property type="match status" value="1"/>
</dbReference>
<dbReference type="Gene3D" id="1.10.10.1200">
    <property type="entry name" value="MAGE homology domain, winged helix WH1 motif"/>
    <property type="match status" value="1"/>
</dbReference>
<dbReference type="Gene3D" id="1.10.10.1210">
    <property type="entry name" value="MAGE homology domain, winged helix WH2 motif"/>
    <property type="match status" value="1"/>
</dbReference>
<dbReference type="InterPro" id="IPR037445">
    <property type="entry name" value="MAGE"/>
</dbReference>
<dbReference type="InterPro" id="IPR041898">
    <property type="entry name" value="MAGE_WH1"/>
</dbReference>
<dbReference type="InterPro" id="IPR041899">
    <property type="entry name" value="MAGE_WH2"/>
</dbReference>
<dbReference type="InterPro" id="IPR002190">
    <property type="entry name" value="MHD_dom"/>
</dbReference>
<dbReference type="PANTHER" id="PTHR11736:SF66">
    <property type="entry name" value="MAGE-LIKE PROTEIN 2"/>
    <property type="match status" value="1"/>
</dbReference>
<dbReference type="PANTHER" id="PTHR11736">
    <property type="entry name" value="MELANOMA-ASSOCIATED ANTIGEN MAGE ANTIGEN"/>
    <property type="match status" value="1"/>
</dbReference>
<dbReference type="Pfam" id="PF01454">
    <property type="entry name" value="MAGE"/>
    <property type="match status" value="1"/>
</dbReference>
<dbReference type="SMART" id="SM01373">
    <property type="entry name" value="MAGE"/>
    <property type="match status" value="1"/>
</dbReference>
<dbReference type="PROSITE" id="PS50838">
    <property type="entry name" value="MAGE"/>
    <property type="match status" value="1"/>
</dbReference>
<feature type="chain" id="PRO_0000156738" description="MAGE-like protein 2">
    <location>
        <begin position="1"/>
        <end position="1249"/>
    </location>
</feature>
<feature type="domain" description="MAGE" evidence="2">
    <location>
        <begin position="1020"/>
        <end position="1219"/>
    </location>
</feature>
<feature type="region of interest" description="Disordered" evidence="3">
    <location>
        <begin position="1"/>
        <end position="50"/>
    </location>
</feature>
<feature type="region of interest" description="Disordered" evidence="3">
    <location>
        <begin position="134"/>
        <end position="233"/>
    </location>
</feature>
<feature type="region of interest" description="Disordered" evidence="3">
    <location>
        <begin position="300"/>
        <end position="327"/>
    </location>
</feature>
<feature type="region of interest" description="Disordered" evidence="3">
    <location>
        <begin position="349"/>
        <end position="378"/>
    </location>
</feature>
<feature type="region of interest" description="Disordered" evidence="3">
    <location>
        <begin position="410"/>
        <end position="433"/>
    </location>
</feature>
<feature type="region of interest" description="Disordered" evidence="3">
    <location>
        <begin position="515"/>
        <end position="569"/>
    </location>
</feature>
<feature type="region of interest" description="Disordered" evidence="3">
    <location>
        <begin position="647"/>
        <end position="679"/>
    </location>
</feature>
<feature type="region of interest" description="Disordered" evidence="3">
    <location>
        <begin position="714"/>
        <end position="746"/>
    </location>
</feature>
<feature type="region of interest" description="Disordered" evidence="3">
    <location>
        <begin position="862"/>
        <end position="910"/>
    </location>
</feature>
<feature type="region of interest" description="Disordered" evidence="3">
    <location>
        <begin position="930"/>
        <end position="957"/>
    </location>
</feature>
<feature type="region of interest" description="Disordered" evidence="3">
    <location>
        <begin position="1226"/>
        <end position="1249"/>
    </location>
</feature>
<feature type="compositionally biased region" description="Polar residues" evidence="3">
    <location>
        <begin position="1"/>
        <end position="10"/>
    </location>
</feature>
<feature type="compositionally biased region" description="Pro residues" evidence="3">
    <location>
        <begin position="40"/>
        <end position="49"/>
    </location>
</feature>
<feature type="compositionally biased region" description="Pro residues" evidence="3">
    <location>
        <begin position="140"/>
        <end position="233"/>
    </location>
</feature>
<feature type="compositionally biased region" description="Low complexity" evidence="3">
    <location>
        <begin position="301"/>
        <end position="311"/>
    </location>
</feature>
<feature type="compositionally biased region" description="Pro residues" evidence="3">
    <location>
        <begin position="312"/>
        <end position="324"/>
    </location>
</feature>
<feature type="compositionally biased region" description="Pro residues" evidence="3">
    <location>
        <begin position="349"/>
        <end position="358"/>
    </location>
</feature>
<feature type="compositionally biased region" description="Polar residues" evidence="3">
    <location>
        <begin position="369"/>
        <end position="378"/>
    </location>
</feature>
<feature type="compositionally biased region" description="Pro residues" evidence="3">
    <location>
        <begin position="410"/>
        <end position="432"/>
    </location>
</feature>
<feature type="compositionally biased region" description="Low complexity" evidence="3">
    <location>
        <begin position="525"/>
        <end position="552"/>
    </location>
</feature>
<feature type="compositionally biased region" description="Pro residues" evidence="3">
    <location>
        <begin position="553"/>
        <end position="567"/>
    </location>
</feature>
<feature type="compositionally biased region" description="Low complexity" evidence="3">
    <location>
        <begin position="662"/>
        <end position="675"/>
    </location>
</feature>
<feature type="compositionally biased region" description="Basic and acidic residues" evidence="3">
    <location>
        <begin position="725"/>
        <end position="746"/>
    </location>
</feature>
<feature type="compositionally biased region" description="Low complexity" evidence="3">
    <location>
        <begin position="862"/>
        <end position="871"/>
    </location>
</feature>
<feature type="compositionally biased region" description="Basic residues" evidence="3">
    <location>
        <begin position="881"/>
        <end position="891"/>
    </location>
</feature>
<feature type="compositionally biased region" description="Acidic residues" evidence="3">
    <location>
        <begin position="1226"/>
        <end position="1235"/>
    </location>
</feature>
<evidence type="ECO:0000250" key="1">
    <source>
        <dbReference type="UniProtKB" id="Q9QZ04"/>
    </source>
</evidence>
<evidence type="ECO:0000255" key="2">
    <source>
        <dbReference type="PROSITE-ProRule" id="PRU00127"/>
    </source>
</evidence>
<evidence type="ECO:0000256" key="3">
    <source>
        <dbReference type="SAM" id="MobiDB-lite"/>
    </source>
</evidence>
<evidence type="ECO:0000269" key="4">
    <source>
    </source>
</evidence>
<evidence type="ECO:0000269" key="5">
    <source>
    </source>
</evidence>
<evidence type="ECO:0000269" key="6">
    <source>
    </source>
</evidence>
<evidence type="ECO:0000269" key="7">
    <source>
    </source>
</evidence>
<evidence type="ECO:0000269" key="8">
    <source>
    </source>
</evidence>
<evidence type="ECO:0000305" key="9"/>
<gene>
    <name type="primary">MAGEL2</name>
    <name type="synonym">NDNL1</name>
</gene>
<reference key="1">
    <citation type="journal article" date="2006" name="Nature">
        <title>Analysis of the DNA sequence and duplication history of human chromosome 15.</title>
        <authorList>
            <person name="Zody M.C."/>
            <person name="Garber M."/>
            <person name="Sharpe T."/>
            <person name="Young S.K."/>
            <person name="Rowen L."/>
            <person name="O'Neill K."/>
            <person name="Whittaker C.A."/>
            <person name="Kamal M."/>
            <person name="Chang J.L."/>
            <person name="Cuomo C.A."/>
            <person name="Dewar K."/>
            <person name="FitzGerald M.G."/>
            <person name="Kodira C.D."/>
            <person name="Madan A."/>
            <person name="Qin S."/>
            <person name="Yang X."/>
            <person name="Abbasi N."/>
            <person name="Abouelleil A."/>
            <person name="Arachchi H.M."/>
            <person name="Baradarani L."/>
            <person name="Birditt B."/>
            <person name="Bloom S."/>
            <person name="Bloom T."/>
            <person name="Borowsky M.L."/>
            <person name="Burke J."/>
            <person name="Butler J."/>
            <person name="Cook A."/>
            <person name="DeArellano K."/>
            <person name="DeCaprio D."/>
            <person name="Dorris L. III"/>
            <person name="Dors M."/>
            <person name="Eichler E.E."/>
            <person name="Engels R."/>
            <person name="Fahey J."/>
            <person name="Fleetwood P."/>
            <person name="Friedman C."/>
            <person name="Gearin G."/>
            <person name="Hall J.L."/>
            <person name="Hensley G."/>
            <person name="Johnson E."/>
            <person name="Jones C."/>
            <person name="Kamat A."/>
            <person name="Kaur A."/>
            <person name="Locke D.P."/>
            <person name="Madan A."/>
            <person name="Munson G."/>
            <person name="Jaffe D.B."/>
            <person name="Lui A."/>
            <person name="Macdonald P."/>
            <person name="Mauceli E."/>
            <person name="Naylor J.W."/>
            <person name="Nesbitt R."/>
            <person name="Nicol R."/>
            <person name="O'Leary S.B."/>
            <person name="Ratcliffe A."/>
            <person name="Rounsley S."/>
            <person name="She X."/>
            <person name="Sneddon K.M.B."/>
            <person name="Stewart S."/>
            <person name="Sougnez C."/>
            <person name="Stone S.M."/>
            <person name="Topham K."/>
            <person name="Vincent D."/>
            <person name="Wang S."/>
            <person name="Zimmer A.R."/>
            <person name="Birren B.W."/>
            <person name="Hood L."/>
            <person name="Lander E.S."/>
            <person name="Nusbaum C."/>
        </authorList>
    </citation>
    <scope>NUCLEOTIDE SEQUENCE [LARGE SCALE GENOMIC DNA]</scope>
</reference>
<reference key="2">
    <citation type="journal article" date="2000" name="Hum. Mol. Genet.">
        <title>Expression and imprinting of MAGEL2 suggest a role in Prader-Willi syndrome and the homologous murine imprinting phenotype.</title>
        <authorList>
            <person name="Lee S."/>
            <person name="Kozlov S."/>
            <person name="Hernandez L."/>
            <person name="Chamberlain S.J."/>
            <person name="Brannan C.I."/>
            <person name="Stewart C.L."/>
            <person name="Wevrick R."/>
        </authorList>
    </citation>
    <scope>NUCLEOTIDE SEQUENCE [GENOMIC DNA] OF 635-1249</scope>
    <scope>TISSUE SPECIFICITY</scope>
</reference>
<reference key="3">
    <citation type="journal article" date="1999" name="Hum. Mol. Genet.">
        <title>The human MAGEL2 gene and its mouse homologue are paternally expressed and mapped to the Prader-Willi region.</title>
        <authorList>
            <person name="Boccaccio I."/>
            <person name="Glatt-Deeley H."/>
            <person name="Watrin F."/>
            <person name="Roeckel N."/>
            <person name="Lalande M."/>
            <person name="Muscatelli F."/>
        </authorList>
    </citation>
    <scope>NUCLEOTIDE SEQUENCE [MRNA] OF 638-1249</scope>
    <source>
        <tissue>Brain</tissue>
        <tissue>Placenta</tissue>
    </source>
</reference>
<reference key="4">
    <citation type="journal article" date="2010" name="Mol. Cell">
        <title>MAGE-RING protein complexes comprise a family of E3 ubiquitin ligases.</title>
        <authorList>
            <person name="Doyle J.M."/>
            <person name="Gao J."/>
            <person name="Wang J."/>
            <person name="Yang M."/>
            <person name="Potts P.R."/>
        </authorList>
    </citation>
    <scope>FUNCTION</scope>
    <scope>INTERACTION WITH TRIM27</scope>
</reference>
<reference key="5">
    <citation type="journal article" date="2013" name="Cell">
        <title>Regulation of WASH-dependent actin polymerization and protein trafficking by ubiquitination.</title>
        <authorList>
            <person name="Hao Y.H."/>
            <person name="Doyle J.M."/>
            <person name="Ramanathan S."/>
            <person name="Gomez T.S."/>
            <person name="Jia D."/>
            <person name="Xu M."/>
            <person name="Chen Z.J."/>
            <person name="Billadeau D.D."/>
            <person name="Rosen M.K."/>
            <person name="Potts P.R."/>
        </authorList>
    </citation>
    <scope>FUNCTION</scope>
    <scope>INTERACTION WITH TRIM27 AND VPS35</scope>
    <scope>SUBCELLULAR LOCATION</scope>
</reference>
<reference key="6">
    <citation type="journal article" date="2013" name="Nat. Genet.">
        <title>Truncating mutations of MAGEL2 cause Prader-Willi phenotypes and autism.</title>
        <authorList>
            <person name="Schaaf C.P."/>
            <person name="Gonzalez-Garay M.L."/>
            <person name="Xia F."/>
            <person name="Potocki L."/>
            <person name="Gripp K.W."/>
            <person name="Zhang B."/>
            <person name="Peters B.A."/>
            <person name="McElwain M.A."/>
            <person name="Drmanac R."/>
            <person name="Beaudet A.L."/>
            <person name="Caskey C.T."/>
            <person name="Yang Y."/>
        </authorList>
    </citation>
    <scope>INVOLVEMENT IN SHFYNG</scope>
</reference>
<reference key="7">
    <citation type="journal article" date="2015" name="Mol. Cell">
        <title>USP7 Acts as a Molecular Rheostat to Promote WASH-Dependent Endosomal Protein Recycling and Is Mutated in a Human Neurodevelopmental Disorder.</title>
        <authorList>
            <person name="Hao Y.H."/>
            <person name="Fountain M.D. Jr."/>
            <person name="Fon Tacer K."/>
            <person name="Xia F."/>
            <person name="Bi W."/>
            <person name="Kang S.H."/>
            <person name="Patel A."/>
            <person name="Rosenfeld J.A."/>
            <person name="Le Caignec C."/>
            <person name="Isidor B."/>
            <person name="Krantz I.D."/>
            <person name="Noon S.E."/>
            <person name="Pfotenhauer J.P."/>
            <person name="Morgan T.M."/>
            <person name="Moran R."/>
            <person name="Pedersen R.C."/>
            <person name="Saenz M.S."/>
            <person name="Schaaf C.P."/>
            <person name="Potts P.R."/>
        </authorList>
    </citation>
    <scope>INTERACTION WITH USP7 AND TRIM27</scope>
</reference>
<comment type="function">
    <text evidence="1 5 6">Probably enhances ubiquitin ligase activity of RING-type zinc finger-containing E3 ubiquitin-protein ligases, possibly through recruitment and/or stabilization of the Ubl-conjugating enzyme (E2) at the E3:substrate complex. Acts as a regulator of retrograde transport via its interaction with VPS35. Recruited to retromer-containing endosomes and promotes the formation of 'Lys-63'-linked polyubiquitin chains at 'Lys-220' of WASHC1 together with TRIM27, leading to promote endosomal F-actin assembly (PubMed:23452853). Regulates the circadian clock by repressing the transcriptional activator activity of the CLOCK-BMAL1 heterodimer. Significantly promotes the cytoplasmic accumulation of CLOCK (By similarity).</text>
</comment>
<comment type="subunit">
    <text evidence="1 5 6 8">Part of a complex consisting of MAGEL2, TRIM27 and USP7; directly interacts with USP7 (PubMed:26365382). Interacts with TRIM27 (PubMed:23452853). Interacts with VPS35; leading to recruitment at retromer-containing endosomes (PubMed:23452853). Interacts with BMAL1 and PER2 (By similarity).</text>
</comment>
<comment type="interaction">
    <interactant intactId="EBI-5668174">
        <id>Q9UJ55</id>
    </interactant>
    <interactant intactId="EBI-701903">
        <id>Q14192</id>
        <label>FHL2</label>
    </interactant>
    <organismsDiffer>false</organismsDiffer>
    <experiments>3</experiments>
</comment>
<comment type="interaction">
    <interactant intactId="EBI-5668174">
        <id>Q9UJ55</id>
    </interactant>
    <interactant intactId="EBI-740595">
        <id>Q9UMX1</id>
        <label>SUFU</label>
    </interactant>
    <organismsDiffer>false</organismsDiffer>
    <experiments>3</experiments>
</comment>
<comment type="interaction">
    <interactant intactId="EBI-5668174">
        <id>Q9UJ55</id>
    </interactant>
    <interactant intactId="EBI-719493">
        <id>P14373</id>
        <label>TRIM27</label>
    </interactant>
    <organismsDiffer>false</organismsDiffer>
    <experiments>4</experiments>
</comment>
<comment type="interaction">
    <interactant intactId="EBI-5668174">
        <id>Q9UJ55</id>
    </interactant>
    <interactant intactId="EBI-302474">
        <id>Q93009</id>
        <label>USP7</label>
    </interactant>
    <organismsDiffer>false</organismsDiffer>
    <experiments>6</experiments>
</comment>
<comment type="subcellular location">
    <subcellularLocation>
        <location evidence="6">Early endosome</location>
    </subcellularLocation>
    <subcellularLocation>
        <location evidence="1">Cytoplasm</location>
    </subcellularLocation>
    <subcellularLocation>
        <location evidence="1">Nucleus</location>
    </subcellularLocation>
    <text evidence="1 6">Recruited to retromer-containing endosomes via interaction with VPS35. Colocalizes with CLOCK and BMAL1 in the cytoplasm, and with PER2 in the cytoplasm and nucleus (By similarity).</text>
</comment>
<comment type="tissue specificity">
    <text evidence="4">Expressed in placenta, fetal and adult brain. Not detected in heart and small intestine, very low levels in fibroblasts. Not expressed in brain of a Prader-Willi patient.</text>
</comment>
<comment type="disease" evidence="7">
    <disease id="DI-03984">
        <name>Schaaf-Yang syndrome</name>
        <acronym>SHFYNG</acronym>
        <description>A disease characterized by clinical features of Prader-Willi syndrome, including neonatal hypotonia with poor suck, feeding problems in infancy, obesity, developmental delay, short stature, and hypogonadism. Additionally, patients manifest autism spectrum disorder. Some patients have dysmorphic facial features.</description>
        <dbReference type="MIM" id="615547"/>
    </disease>
    <text>The disease is caused by variants affecting the gene represented in this entry. All mutations occurred on the paternal allele.</text>
</comment>
<comment type="miscellaneous">
    <text>Imprinted, expressed from the paternal chromosome only.</text>
</comment>
<comment type="sequence caution" evidence="9">
    <conflict type="frameshift">
        <sequence resource="EMBL-CDS" id="AAG28577"/>
    </conflict>
</comment>
<comment type="sequence caution" evidence="9">
    <conflict type="frameshift">
        <sequence resource="EMBL-CDS" id="CAB62393"/>
    </conflict>
</comment>
<accession>Q9UJ55</accession>
<accession>H0YDD5</accession>
<protein>
    <recommendedName>
        <fullName>MAGE-like protein 2</fullName>
    </recommendedName>
    <alternativeName>
        <fullName>Necdin-like protein 1</fullName>
    </alternativeName>
    <alternativeName>
        <fullName>Protein nM15</fullName>
    </alternativeName>
</protein>